<proteinExistence type="evidence at transcript level"/>
<feature type="signal peptide" evidence="2">
    <location>
        <begin position="1"/>
        <end position="19"/>
    </location>
</feature>
<feature type="chain" id="PRO_0000007055" description="Defensin-like protein P322">
    <location>
        <begin position="20"/>
        <end position="74"/>
    </location>
</feature>
<feature type="disulfide bond" evidence="1">
    <location>
        <begin position="30"/>
        <end position="74"/>
    </location>
</feature>
<feature type="disulfide bond" evidence="1">
    <location>
        <begin position="41"/>
        <end position="61"/>
    </location>
</feature>
<feature type="disulfide bond" evidence="1">
    <location>
        <begin position="47"/>
        <end position="68"/>
    </location>
</feature>
<feature type="disulfide bond" evidence="1">
    <location>
        <begin position="51"/>
        <end position="70"/>
    </location>
</feature>
<organism>
    <name type="scientific">Solanum tuberosum</name>
    <name type="common">Potato</name>
    <dbReference type="NCBI Taxonomy" id="4113"/>
    <lineage>
        <taxon>Eukaryota</taxon>
        <taxon>Viridiplantae</taxon>
        <taxon>Streptophyta</taxon>
        <taxon>Embryophyta</taxon>
        <taxon>Tracheophyta</taxon>
        <taxon>Spermatophyta</taxon>
        <taxon>Magnoliopsida</taxon>
        <taxon>eudicotyledons</taxon>
        <taxon>Gunneridae</taxon>
        <taxon>Pentapetalae</taxon>
        <taxon>asterids</taxon>
        <taxon>lamiids</taxon>
        <taxon>Solanales</taxon>
        <taxon>Solanaceae</taxon>
        <taxon>Solanoideae</taxon>
        <taxon>Solaneae</taxon>
        <taxon>Solanum</taxon>
    </lineage>
</organism>
<reference key="1">
    <citation type="journal article" date="1988" name="Plant Mol. Biol.">
        <title>Molecular cloning and analysis of four potato tuber mRNAs.</title>
        <authorList>
            <person name="Stiekema W.J."/>
            <person name="Heidekamp F."/>
            <person name="Dirkse W.G."/>
            <person name="van Beckum J."/>
            <person name="de Haan P."/>
            <person name="ten Bosch C."/>
            <person name="Louwerse J.D."/>
        </authorList>
        <dbReference type="AGRICOLA" id="IND92000050"/>
    </citation>
    <scope>NUCLEOTIDE SEQUENCE [MRNA]</scope>
    <source>
        <strain>cv. Bintje</strain>
    </source>
</reference>
<accession>P20346</accession>
<evidence type="ECO:0000250" key="1"/>
<evidence type="ECO:0000255" key="2"/>
<evidence type="ECO:0000305" key="3"/>
<comment type="subcellular location">
    <subcellularLocation>
        <location evidence="1">Secreted</location>
    </subcellularLocation>
</comment>
<comment type="tissue specificity">
    <text>Tuber.</text>
</comment>
<comment type="similarity">
    <text evidence="3">Belongs to the DEFL family. Protease inhibitor I18 (RTI/MTI-2) subfamily.</text>
</comment>
<comment type="caution">
    <text evidence="3">Was initially thought (Ref.1) to be a protease inhibitor.</text>
</comment>
<sequence length="74" mass="8414">MRFFATFFLLAMLVVATKMGPMRIAEARHCESLSHRFKGPCTRDSNCASVCETERFSGGNCHGFRRRCFCTKPC</sequence>
<keyword id="KW-0929">Antimicrobial</keyword>
<keyword id="KW-1015">Disulfide bond</keyword>
<keyword id="KW-0295">Fungicide</keyword>
<keyword id="KW-0611">Plant defense</keyword>
<keyword id="KW-1185">Reference proteome</keyword>
<keyword id="KW-0964">Secreted</keyword>
<keyword id="KW-0732">Signal</keyword>
<protein>
    <recommendedName>
        <fullName>Defensin-like protein P322</fullName>
    </recommendedName>
    <alternativeName>
        <fullName>Probable protease inhibitor P322</fullName>
    </alternativeName>
</protein>
<dbReference type="EMBL" id="X13180">
    <property type="protein sequence ID" value="CAA31577.1"/>
    <property type="molecule type" value="mRNA"/>
</dbReference>
<dbReference type="PIR" id="S05594">
    <property type="entry name" value="S05594"/>
</dbReference>
<dbReference type="SMR" id="P20346"/>
<dbReference type="FunCoup" id="P20346">
    <property type="interactions" value="1001"/>
</dbReference>
<dbReference type="STRING" id="4113.P20346"/>
<dbReference type="PaxDb" id="4113-PGSC0003DMT400039131"/>
<dbReference type="eggNOG" id="ENOG502S7HM">
    <property type="taxonomic scope" value="Eukaryota"/>
</dbReference>
<dbReference type="InParanoid" id="P20346"/>
<dbReference type="Proteomes" id="UP000011115">
    <property type="component" value="Unassembled WGS sequence"/>
</dbReference>
<dbReference type="ExpressionAtlas" id="P20346">
    <property type="expression patterns" value="baseline and differential"/>
</dbReference>
<dbReference type="GO" id="GO:0005576">
    <property type="term" value="C:extracellular region"/>
    <property type="evidence" value="ECO:0007669"/>
    <property type="project" value="UniProtKB-SubCell"/>
</dbReference>
<dbReference type="GO" id="GO:0006952">
    <property type="term" value="P:defense response"/>
    <property type="evidence" value="ECO:0000318"/>
    <property type="project" value="GO_Central"/>
</dbReference>
<dbReference type="GO" id="GO:0050832">
    <property type="term" value="P:defense response to fungus"/>
    <property type="evidence" value="ECO:0007669"/>
    <property type="project" value="UniProtKB-KW"/>
</dbReference>
<dbReference type="GO" id="GO:0031640">
    <property type="term" value="P:killing of cells of another organism"/>
    <property type="evidence" value="ECO:0007669"/>
    <property type="project" value="UniProtKB-KW"/>
</dbReference>
<dbReference type="CDD" id="cd00107">
    <property type="entry name" value="Knot1"/>
    <property type="match status" value="1"/>
</dbReference>
<dbReference type="Gene3D" id="3.30.30.10">
    <property type="entry name" value="Knottin, scorpion toxin-like"/>
    <property type="match status" value="1"/>
</dbReference>
<dbReference type="InterPro" id="IPR008176">
    <property type="entry name" value="Defensin_plant"/>
</dbReference>
<dbReference type="InterPro" id="IPR003614">
    <property type="entry name" value="Scorpion_toxin-like"/>
</dbReference>
<dbReference type="InterPro" id="IPR036574">
    <property type="entry name" value="Scorpion_toxin-like_sf"/>
</dbReference>
<dbReference type="PANTHER" id="PTHR33147">
    <property type="entry name" value="DEFENSIN-LIKE PROTEIN 1"/>
    <property type="match status" value="1"/>
</dbReference>
<dbReference type="PANTHER" id="PTHR33147:SF114">
    <property type="entry name" value="DEFENSIN-LIKE PROTEIN P322"/>
    <property type="match status" value="1"/>
</dbReference>
<dbReference type="Pfam" id="PF00304">
    <property type="entry name" value="Gamma-thionin"/>
    <property type="match status" value="1"/>
</dbReference>
<dbReference type="PRINTS" id="PR00288">
    <property type="entry name" value="PUROTHIONIN"/>
</dbReference>
<dbReference type="SMART" id="SM00505">
    <property type="entry name" value="Knot1"/>
    <property type="match status" value="1"/>
</dbReference>
<dbReference type="SUPFAM" id="SSF57095">
    <property type="entry name" value="Scorpion toxin-like"/>
    <property type="match status" value="1"/>
</dbReference>
<dbReference type="PROSITE" id="PS00940">
    <property type="entry name" value="GAMMA_THIONIN"/>
    <property type="match status" value="1"/>
</dbReference>
<name>DF322_SOLTU</name>